<reference key="1">
    <citation type="journal article" date="2007" name="J. Bacteriol.">
        <title>Whole-genome analysis of the methyl tert-butyl ether-degrading beta-proteobacterium Methylibium petroleiphilum PM1.</title>
        <authorList>
            <person name="Kane S.R."/>
            <person name="Chakicherla A.Y."/>
            <person name="Chain P.S.G."/>
            <person name="Schmidt R."/>
            <person name="Shin M.W."/>
            <person name="Legler T.C."/>
            <person name="Scow K.M."/>
            <person name="Larimer F.W."/>
            <person name="Lucas S.M."/>
            <person name="Richardson P.M."/>
            <person name="Hristova K.R."/>
        </authorList>
    </citation>
    <scope>NUCLEOTIDE SEQUENCE [LARGE SCALE GENOMIC DNA]</scope>
    <source>
        <strain>ATCC BAA-1232 / LMG 22953 / PM1</strain>
    </source>
</reference>
<organism>
    <name type="scientific">Methylibium petroleiphilum (strain ATCC BAA-1232 / LMG 22953 / PM1)</name>
    <dbReference type="NCBI Taxonomy" id="420662"/>
    <lineage>
        <taxon>Bacteria</taxon>
        <taxon>Pseudomonadati</taxon>
        <taxon>Pseudomonadota</taxon>
        <taxon>Betaproteobacteria</taxon>
        <taxon>Burkholderiales</taxon>
        <taxon>Sphaerotilaceae</taxon>
        <taxon>Methylibium</taxon>
    </lineage>
</organism>
<keyword id="KW-1185">Reference proteome</keyword>
<keyword id="KW-0687">Ribonucleoprotein</keyword>
<keyword id="KW-0689">Ribosomal protein</keyword>
<keyword id="KW-0694">RNA-binding</keyword>
<keyword id="KW-0699">rRNA-binding</keyword>
<keyword id="KW-0820">tRNA-binding</keyword>
<name>RL16_METPP</name>
<gene>
    <name evidence="1" type="primary">rplP</name>
    <name type="ordered locus">Mpe_A3436</name>
</gene>
<protein>
    <recommendedName>
        <fullName evidence="1">Large ribosomal subunit protein uL16</fullName>
    </recommendedName>
    <alternativeName>
        <fullName evidence="3">50S ribosomal protein L16</fullName>
    </alternativeName>
</protein>
<feature type="chain" id="PRO_1000054651" description="Large ribosomal subunit protein uL16">
    <location>
        <begin position="1"/>
        <end position="138"/>
    </location>
</feature>
<feature type="region of interest" description="Disordered" evidence="2">
    <location>
        <begin position="1"/>
        <end position="22"/>
    </location>
</feature>
<feature type="compositionally biased region" description="Basic residues" evidence="2">
    <location>
        <begin position="1"/>
        <end position="13"/>
    </location>
</feature>
<evidence type="ECO:0000255" key="1">
    <source>
        <dbReference type="HAMAP-Rule" id="MF_01342"/>
    </source>
</evidence>
<evidence type="ECO:0000256" key="2">
    <source>
        <dbReference type="SAM" id="MobiDB-lite"/>
    </source>
</evidence>
<evidence type="ECO:0000305" key="3"/>
<comment type="function">
    <text evidence="1">Binds 23S rRNA and is also seen to make contacts with the A and possibly P site tRNAs.</text>
</comment>
<comment type="subunit">
    <text evidence="1">Part of the 50S ribosomal subunit.</text>
</comment>
<comment type="similarity">
    <text evidence="1">Belongs to the universal ribosomal protein uL16 family.</text>
</comment>
<sequence>MLQPSRRKFRKEQKGRNTGIATRGANVSFGDFGLKATERGRLTARQIEAARRAISRHVKRGGRIWIRIFPDKPISQKPAEVRMGNGKGNPEYYVAEIQPGKVLYEINGVPEELAREAFTLAAAKLPLRCTFVSRQIGA</sequence>
<accession>A2SLF0</accession>
<proteinExistence type="inferred from homology"/>
<dbReference type="EMBL" id="CP000555">
    <property type="protein sequence ID" value="ABM96389.1"/>
    <property type="molecule type" value="Genomic_DNA"/>
</dbReference>
<dbReference type="RefSeq" id="WP_011831010.1">
    <property type="nucleotide sequence ID" value="NC_008825.1"/>
</dbReference>
<dbReference type="SMR" id="A2SLF0"/>
<dbReference type="STRING" id="420662.Mpe_A3436"/>
<dbReference type="KEGG" id="mpt:Mpe_A3436"/>
<dbReference type="eggNOG" id="COG0197">
    <property type="taxonomic scope" value="Bacteria"/>
</dbReference>
<dbReference type="HOGENOM" id="CLU_078858_2_1_4"/>
<dbReference type="Proteomes" id="UP000000366">
    <property type="component" value="Chromosome"/>
</dbReference>
<dbReference type="GO" id="GO:0022625">
    <property type="term" value="C:cytosolic large ribosomal subunit"/>
    <property type="evidence" value="ECO:0007669"/>
    <property type="project" value="TreeGrafter"/>
</dbReference>
<dbReference type="GO" id="GO:0019843">
    <property type="term" value="F:rRNA binding"/>
    <property type="evidence" value="ECO:0007669"/>
    <property type="project" value="UniProtKB-UniRule"/>
</dbReference>
<dbReference type="GO" id="GO:0003735">
    <property type="term" value="F:structural constituent of ribosome"/>
    <property type="evidence" value="ECO:0007669"/>
    <property type="project" value="InterPro"/>
</dbReference>
<dbReference type="GO" id="GO:0000049">
    <property type="term" value="F:tRNA binding"/>
    <property type="evidence" value="ECO:0007669"/>
    <property type="project" value="UniProtKB-KW"/>
</dbReference>
<dbReference type="GO" id="GO:0006412">
    <property type="term" value="P:translation"/>
    <property type="evidence" value="ECO:0007669"/>
    <property type="project" value="UniProtKB-UniRule"/>
</dbReference>
<dbReference type="CDD" id="cd01433">
    <property type="entry name" value="Ribosomal_L16_L10e"/>
    <property type="match status" value="1"/>
</dbReference>
<dbReference type="FunFam" id="3.90.1170.10:FF:000001">
    <property type="entry name" value="50S ribosomal protein L16"/>
    <property type="match status" value="1"/>
</dbReference>
<dbReference type="Gene3D" id="3.90.1170.10">
    <property type="entry name" value="Ribosomal protein L10e/L16"/>
    <property type="match status" value="1"/>
</dbReference>
<dbReference type="HAMAP" id="MF_01342">
    <property type="entry name" value="Ribosomal_uL16"/>
    <property type="match status" value="1"/>
</dbReference>
<dbReference type="InterPro" id="IPR047873">
    <property type="entry name" value="Ribosomal_uL16"/>
</dbReference>
<dbReference type="InterPro" id="IPR000114">
    <property type="entry name" value="Ribosomal_uL16_bact-type"/>
</dbReference>
<dbReference type="InterPro" id="IPR020798">
    <property type="entry name" value="Ribosomal_uL16_CS"/>
</dbReference>
<dbReference type="InterPro" id="IPR016180">
    <property type="entry name" value="Ribosomal_uL16_dom"/>
</dbReference>
<dbReference type="InterPro" id="IPR036920">
    <property type="entry name" value="Ribosomal_uL16_sf"/>
</dbReference>
<dbReference type="NCBIfam" id="TIGR01164">
    <property type="entry name" value="rplP_bact"/>
    <property type="match status" value="1"/>
</dbReference>
<dbReference type="PANTHER" id="PTHR12220">
    <property type="entry name" value="50S/60S RIBOSOMAL PROTEIN L16"/>
    <property type="match status" value="1"/>
</dbReference>
<dbReference type="PANTHER" id="PTHR12220:SF13">
    <property type="entry name" value="LARGE RIBOSOMAL SUBUNIT PROTEIN UL16M"/>
    <property type="match status" value="1"/>
</dbReference>
<dbReference type="Pfam" id="PF00252">
    <property type="entry name" value="Ribosomal_L16"/>
    <property type="match status" value="1"/>
</dbReference>
<dbReference type="PRINTS" id="PR00060">
    <property type="entry name" value="RIBOSOMALL16"/>
</dbReference>
<dbReference type="SUPFAM" id="SSF54686">
    <property type="entry name" value="Ribosomal protein L16p/L10e"/>
    <property type="match status" value="1"/>
</dbReference>
<dbReference type="PROSITE" id="PS00586">
    <property type="entry name" value="RIBOSOMAL_L16_1"/>
    <property type="match status" value="1"/>
</dbReference>